<name>PUR9_SHOC1</name>
<reference key="1">
    <citation type="submission" date="2003-10" db="EMBL/GenBank/DDBJ databases">
        <title>The complete genome sequence of the alkaliphilic Bacillus clausii KSM-K16.</title>
        <authorList>
            <person name="Takaki Y."/>
            <person name="Kageyama Y."/>
            <person name="Shimamura S."/>
            <person name="Suzuki H."/>
            <person name="Nishi S."/>
            <person name="Hatada Y."/>
            <person name="Kawai S."/>
            <person name="Ito S."/>
            <person name="Horikoshi K."/>
        </authorList>
    </citation>
    <scope>NUCLEOTIDE SEQUENCE [LARGE SCALE GENOMIC DNA]</scope>
    <source>
        <strain>KSM-K16</strain>
    </source>
</reference>
<protein>
    <recommendedName>
        <fullName evidence="1">Bifunctional purine biosynthesis protein PurH</fullName>
    </recommendedName>
    <domain>
        <recommendedName>
            <fullName evidence="1">Phosphoribosylaminoimidazolecarboxamide formyltransferase</fullName>
            <ecNumber evidence="1">2.1.2.3</ecNumber>
        </recommendedName>
        <alternativeName>
            <fullName evidence="1">AICAR transformylase</fullName>
        </alternativeName>
    </domain>
    <domain>
        <recommendedName>
            <fullName evidence="1">IMP cyclohydrolase</fullName>
            <ecNumber evidence="1">3.5.4.10</ecNumber>
        </recommendedName>
        <alternativeName>
            <fullName evidence="1">ATIC</fullName>
        </alternativeName>
        <alternativeName>
            <fullName evidence="1">IMP synthase</fullName>
        </alternativeName>
        <alternativeName>
            <fullName evidence="1">Inosinicase</fullName>
        </alternativeName>
    </domain>
</protein>
<evidence type="ECO:0000255" key="1">
    <source>
        <dbReference type="HAMAP-Rule" id="MF_00139"/>
    </source>
</evidence>
<evidence type="ECO:0000255" key="2">
    <source>
        <dbReference type="PROSITE-ProRule" id="PRU01202"/>
    </source>
</evidence>
<accession>Q5WJ82</accession>
<comment type="catalytic activity">
    <reaction evidence="1">
        <text>(6R)-10-formyltetrahydrofolate + 5-amino-1-(5-phospho-beta-D-ribosyl)imidazole-4-carboxamide = 5-formamido-1-(5-phospho-D-ribosyl)imidazole-4-carboxamide + (6S)-5,6,7,8-tetrahydrofolate</text>
        <dbReference type="Rhea" id="RHEA:22192"/>
        <dbReference type="ChEBI" id="CHEBI:57453"/>
        <dbReference type="ChEBI" id="CHEBI:58467"/>
        <dbReference type="ChEBI" id="CHEBI:58475"/>
        <dbReference type="ChEBI" id="CHEBI:195366"/>
        <dbReference type="EC" id="2.1.2.3"/>
    </reaction>
</comment>
<comment type="catalytic activity">
    <reaction evidence="1">
        <text>IMP + H2O = 5-formamido-1-(5-phospho-D-ribosyl)imidazole-4-carboxamide</text>
        <dbReference type="Rhea" id="RHEA:18445"/>
        <dbReference type="ChEBI" id="CHEBI:15377"/>
        <dbReference type="ChEBI" id="CHEBI:58053"/>
        <dbReference type="ChEBI" id="CHEBI:58467"/>
        <dbReference type="EC" id="3.5.4.10"/>
    </reaction>
</comment>
<comment type="pathway">
    <text evidence="1">Purine metabolism; IMP biosynthesis via de novo pathway; 5-formamido-1-(5-phospho-D-ribosyl)imidazole-4-carboxamide from 5-amino-1-(5-phospho-D-ribosyl)imidazole-4-carboxamide (10-formyl THF route): step 1/1.</text>
</comment>
<comment type="pathway">
    <text evidence="1">Purine metabolism; IMP biosynthesis via de novo pathway; IMP from 5-formamido-1-(5-phospho-D-ribosyl)imidazole-4-carboxamide: step 1/1.</text>
</comment>
<comment type="domain">
    <text evidence="1">The IMP cyclohydrolase activity resides in the N-terminal region.</text>
</comment>
<comment type="similarity">
    <text evidence="1">Belongs to the PurH family.</text>
</comment>
<proteinExistence type="inferred from homology"/>
<organism>
    <name type="scientific">Shouchella clausii (strain KSM-K16)</name>
    <name type="common">Alkalihalobacillus clausii</name>
    <dbReference type="NCBI Taxonomy" id="66692"/>
    <lineage>
        <taxon>Bacteria</taxon>
        <taxon>Bacillati</taxon>
        <taxon>Bacillota</taxon>
        <taxon>Bacilli</taxon>
        <taxon>Bacillales</taxon>
        <taxon>Bacillaceae</taxon>
        <taxon>Shouchella</taxon>
    </lineage>
</organism>
<sequence length="511" mass="54665">MTKRALVSVSNKTGLIPFVKGLAEAGVEILSTGGGTKRALEEAGIAVVNVSDVTGFPEILDGRVKTLHPNIHGGLLAMRTNDEHIKQIEELGIEPIDYVVVNLYPFAETIANPDASFADAIENIDIGGPSMLRSAAKNHADVTVVVDPADYDAVLASLDASKEEQLALRQKLAAKVFRHTAAYDAMIGSYLTDAVGEENPESLTVTYTHKQTLRYGENPHQKAAFYESRTSSPSSIAQAKQLHGKELSYNNINDANAALEIVKEFSEPAAVAVKHMNPCGVGTGATVGEAYTRAYEADPKSIFGGIVALNREVDRATAEKMAAIFLEVILAPSFSEEAKAILQQKKNIRLLEVAVTKGELEKKLASVHGGLLIQEEDHLGFDDGDIRIPTKREPTEEEWTALKLGWKVVKHVKSNAIVLTNGEMTVGIGAGQMNRVGAAAIAIEQAGERAQGAALASDAFFPYGDTVEAAAKAGITAIIQPGGSVRDNESIEKADEYGIAMVFTGVRHFKH</sequence>
<keyword id="KW-0378">Hydrolase</keyword>
<keyword id="KW-0511">Multifunctional enzyme</keyword>
<keyword id="KW-0658">Purine biosynthesis</keyword>
<keyword id="KW-1185">Reference proteome</keyword>
<keyword id="KW-0808">Transferase</keyword>
<feature type="chain" id="PRO_1000018843" description="Bifunctional purine biosynthesis protein PurH">
    <location>
        <begin position="1"/>
        <end position="511"/>
    </location>
</feature>
<feature type="domain" description="MGS-like" evidence="2">
    <location>
        <begin position="1"/>
        <end position="146"/>
    </location>
</feature>
<dbReference type="EC" id="2.1.2.3" evidence="1"/>
<dbReference type="EC" id="3.5.4.10" evidence="1"/>
<dbReference type="EMBL" id="AP006627">
    <property type="protein sequence ID" value="BAD63573.1"/>
    <property type="molecule type" value="Genomic_DNA"/>
</dbReference>
<dbReference type="RefSeq" id="WP_011245889.1">
    <property type="nucleotide sequence ID" value="NC_006582.1"/>
</dbReference>
<dbReference type="SMR" id="Q5WJ82"/>
<dbReference type="STRING" id="66692.ABC1034"/>
<dbReference type="KEGG" id="bcl:ABC1034"/>
<dbReference type="eggNOG" id="COG0138">
    <property type="taxonomic scope" value="Bacteria"/>
</dbReference>
<dbReference type="HOGENOM" id="CLU_016316_5_2_9"/>
<dbReference type="OrthoDB" id="9802065at2"/>
<dbReference type="UniPathway" id="UPA00074">
    <property type="reaction ID" value="UER00133"/>
</dbReference>
<dbReference type="UniPathway" id="UPA00074">
    <property type="reaction ID" value="UER00135"/>
</dbReference>
<dbReference type="Proteomes" id="UP000001168">
    <property type="component" value="Chromosome"/>
</dbReference>
<dbReference type="GO" id="GO:0005829">
    <property type="term" value="C:cytosol"/>
    <property type="evidence" value="ECO:0007669"/>
    <property type="project" value="TreeGrafter"/>
</dbReference>
<dbReference type="GO" id="GO:0003937">
    <property type="term" value="F:IMP cyclohydrolase activity"/>
    <property type="evidence" value="ECO:0007669"/>
    <property type="project" value="UniProtKB-UniRule"/>
</dbReference>
<dbReference type="GO" id="GO:0004643">
    <property type="term" value="F:phosphoribosylaminoimidazolecarboxamide formyltransferase activity"/>
    <property type="evidence" value="ECO:0007669"/>
    <property type="project" value="UniProtKB-UniRule"/>
</dbReference>
<dbReference type="GO" id="GO:0006189">
    <property type="term" value="P:'de novo' IMP biosynthetic process"/>
    <property type="evidence" value="ECO:0007669"/>
    <property type="project" value="UniProtKB-UniRule"/>
</dbReference>
<dbReference type="CDD" id="cd01421">
    <property type="entry name" value="IMPCH"/>
    <property type="match status" value="1"/>
</dbReference>
<dbReference type="FunFam" id="3.40.140.20:FF:000001">
    <property type="entry name" value="Bifunctional purine biosynthesis protein PurH"/>
    <property type="match status" value="1"/>
</dbReference>
<dbReference type="FunFam" id="3.40.140.20:FF:000002">
    <property type="entry name" value="Bifunctional purine biosynthesis protein PurH"/>
    <property type="match status" value="1"/>
</dbReference>
<dbReference type="FunFam" id="3.40.50.1380:FF:000001">
    <property type="entry name" value="Bifunctional purine biosynthesis protein PurH"/>
    <property type="match status" value="1"/>
</dbReference>
<dbReference type="Gene3D" id="3.40.140.20">
    <property type="match status" value="2"/>
</dbReference>
<dbReference type="Gene3D" id="3.40.50.1380">
    <property type="entry name" value="Methylglyoxal synthase-like domain"/>
    <property type="match status" value="1"/>
</dbReference>
<dbReference type="HAMAP" id="MF_00139">
    <property type="entry name" value="PurH"/>
    <property type="match status" value="1"/>
</dbReference>
<dbReference type="InterPro" id="IPR024051">
    <property type="entry name" value="AICAR_Tfase_dup_dom_sf"/>
</dbReference>
<dbReference type="InterPro" id="IPR016193">
    <property type="entry name" value="Cytidine_deaminase-like"/>
</dbReference>
<dbReference type="InterPro" id="IPR011607">
    <property type="entry name" value="MGS-like_dom"/>
</dbReference>
<dbReference type="InterPro" id="IPR036914">
    <property type="entry name" value="MGS-like_dom_sf"/>
</dbReference>
<dbReference type="InterPro" id="IPR002695">
    <property type="entry name" value="PurH-like"/>
</dbReference>
<dbReference type="NCBIfam" id="NF002049">
    <property type="entry name" value="PRK00881.1"/>
    <property type="match status" value="1"/>
</dbReference>
<dbReference type="NCBIfam" id="TIGR00355">
    <property type="entry name" value="purH"/>
    <property type="match status" value="1"/>
</dbReference>
<dbReference type="PANTHER" id="PTHR11692:SF0">
    <property type="entry name" value="BIFUNCTIONAL PURINE BIOSYNTHESIS PROTEIN ATIC"/>
    <property type="match status" value="1"/>
</dbReference>
<dbReference type="PANTHER" id="PTHR11692">
    <property type="entry name" value="BIFUNCTIONAL PURINE BIOSYNTHESIS PROTEIN PURH"/>
    <property type="match status" value="1"/>
</dbReference>
<dbReference type="Pfam" id="PF01808">
    <property type="entry name" value="AICARFT_IMPCHas"/>
    <property type="match status" value="1"/>
</dbReference>
<dbReference type="Pfam" id="PF02142">
    <property type="entry name" value="MGS"/>
    <property type="match status" value="1"/>
</dbReference>
<dbReference type="PIRSF" id="PIRSF000414">
    <property type="entry name" value="AICARFT_IMPCHas"/>
    <property type="match status" value="1"/>
</dbReference>
<dbReference type="SMART" id="SM00798">
    <property type="entry name" value="AICARFT_IMPCHas"/>
    <property type="match status" value="1"/>
</dbReference>
<dbReference type="SMART" id="SM00851">
    <property type="entry name" value="MGS"/>
    <property type="match status" value="1"/>
</dbReference>
<dbReference type="SUPFAM" id="SSF53927">
    <property type="entry name" value="Cytidine deaminase-like"/>
    <property type="match status" value="1"/>
</dbReference>
<dbReference type="SUPFAM" id="SSF52335">
    <property type="entry name" value="Methylglyoxal synthase-like"/>
    <property type="match status" value="1"/>
</dbReference>
<dbReference type="PROSITE" id="PS51855">
    <property type="entry name" value="MGS"/>
    <property type="match status" value="1"/>
</dbReference>
<gene>
    <name evidence="1" type="primary">purH</name>
    <name type="ordered locus">ABC1034</name>
</gene>